<dbReference type="EMBL" id="AM884176">
    <property type="protein sequence ID" value="CAP04010.1"/>
    <property type="molecule type" value="Genomic_DNA"/>
</dbReference>
<dbReference type="RefSeq" id="WP_009872555.1">
    <property type="nucleotide sequence ID" value="NC_010287.1"/>
</dbReference>
<dbReference type="RefSeq" id="YP_001654646.1">
    <property type="nucleotide sequence ID" value="NC_010287.1"/>
</dbReference>
<dbReference type="SMR" id="B0B7N4"/>
<dbReference type="KEGG" id="ctb:CTL0570"/>
<dbReference type="PATRIC" id="fig|471472.4.peg.611"/>
<dbReference type="HOGENOM" id="CLU_062853_0_0_0"/>
<dbReference type="Proteomes" id="UP001154402">
    <property type="component" value="Chromosome"/>
</dbReference>
<dbReference type="GO" id="GO:0015934">
    <property type="term" value="C:large ribosomal subunit"/>
    <property type="evidence" value="ECO:0007669"/>
    <property type="project" value="InterPro"/>
</dbReference>
<dbReference type="GO" id="GO:0019843">
    <property type="term" value="F:rRNA binding"/>
    <property type="evidence" value="ECO:0007669"/>
    <property type="project" value="UniProtKB-UniRule"/>
</dbReference>
<dbReference type="GO" id="GO:0003735">
    <property type="term" value="F:structural constituent of ribosome"/>
    <property type="evidence" value="ECO:0007669"/>
    <property type="project" value="InterPro"/>
</dbReference>
<dbReference type="GO" id="GO:0000049">
    <property type="term" value="F:tRNA binding"/>
    <property type="evidence" value="ECO:0007669"/>
    <property type="project" value="UniProtKB-KW"/>
</dbReference>
<dbReference type="GO" id="GO:0006417">
    <property type="term" value="P:regulation of translation"/>
    <property type="evidence" value="ECO:0007669"/>
    <property type="project" value="UniProtKB-KW"/>
</dbReference>
<dbReference type="GO" id="GO:0006412">
    <property type="term" value="P:translation"/>
    <property type="evidence" value="ECO:0007669"/>
    <property type="project" value="UniProtKB-UniRule"/>
</dbReference>
<dbReference type="CDD" id="cd00403">
    <property type="entry name" value="Ribosomal_L1"/>
    <property type="match status" value="1"/>
</dbReference>
<dbReference type="FunFam" id="3.40.50.790:FF:000001">
    <property type="entry name" value="50S ribosomal protein L1"/>
    <property type="match status" value="1"/>
</dbReference>
<dbReference type="Gene3D" id="3.30.190.20">
    <property type="match status" value="1"/>
</dbReference>
<dbReference type="Gene3D" id="3.40.50.790">
    <property type="match status" value="1"/>
</dbReference>
<dbReference type="HAMAP" id="MF_01318_B">
    <property type="entry name" value="Ribosomal_uL1_B"/>
    <property type="match status" value="1"/>
</dbReference>
<dbReference type="InterPro" id="IPR005878">
    <property type="entry name" value="Ribosom_uL1_bac-type"/>
</dbReference>
<dbReference type="InterPro" id="IPR002143">
    <property type="entry name" value="Ribosomal_uL1"/>
</dbReference>
<dbReference type="InterPro" id="IPR023674">
    <property type="entry name" value="Ribosomal_uL1-like"/>
</dbReference>
<dbReference type="InterPro" id="IPR028364">
    <property type="entry name" value="Ribosomal_uL1/biogenesis"/>
</dbReference>
<dbReference type="InterPro" id="IPR016095">
    <property type="entry name" value="Ribosomal_uL1_3-a/b-sand"/>
</dbReference>
<dbReference type="InterPro" id="IPR023673">
    <property type="entry name" value="Ribosomal_uL1_CS"/>
</dbReference>
<dbReference type="NCBIfam" id="TIGR01169">
    <property type="entry name" value="rplA_bact"/>
    <property type="match status" value="1"/>
</dbReference>
<dbReference type="PANTHER" id="PTHR36427">
    <property type="entry name" value="54S RIBOSOMAL PROTEIN L1, MITOCHONDRIAL"/>
    <property type="match status" value="1"/>
</dbReference>
<dbReference type="PANTHER" id="PTHR36427:SF3">
    <property type="entry name" value="LARGE RIBOSOMAL SUBUNIT PROTEIN UL1M"/>
    <property type="match status" value="1"/>
</dbReference>
<dbReference type="Pfam" id="PF00687">
    <property type="entry name" value="Ribosomal_L1"/>
    <property type="match status" value="1"/>
</dbReference>
<dbReference type="PIRSF" id="PIRSF002155">
    <property type="entry name" value="Ribosomal_L1"/>
    <property type="match status" value="1"/>
</dbReference>
<dbReference type="SUPFAM" id="SSF56808">
    <property type="entry name" value="Ribosomal protein L1"/>
    <property type="match status" value="1"/>
</dbReference>
<dbReference type="PROSITE" id="PS01199">
    <property type="entry name" value="RIBOSOMAL_L1"/>
    <property type="match status" value="1"/>
</dbReference>
<comment type="function">
    <text evidence="1">Binds directly to 23S rRNA. The L1 stalk is quite mobile in the ribosome, and is involved in E site tRNA release.</text>
</comment>
<comment type="function">
    <text evidence="1">Protein L1 is also a translational repressor protein, it controls the translation of the L11 operon by binding to its mRNA.</text>
</comment>
<comment type="subunit">
    <text evidence="1">Part of the 50S ribosomal subunit.</text>
</comment>
<comment type="similarity">
    <text evidence="1">Belongs to the universal ribosomal protein uL1 family.</text>
</comment>
<gene>
    <name evidence="1" type="primary">rplA</name>
    <name type="ordered locus">CTL0570</name>
</gene>
<evidence type="ECO:0000255" key="1">
    <source>
        <dbReference type="HAMAP-Rule" id="MF_01318"/>
    </source>
</evidence>
<evidence type="ECO:0000305" key="2"/>
<name>RL1_CHLT2</name>
<reference key="1">
    <citation type="journal article" date="2008" name="Genome Res.">
        <title>Chlamydia trachomatis: genome sequence analysis of lymphogranuloma venereum isolates.</title>
        <authorList>
            <person name="Thomson N.R."/>
            <person name="Holden M.T.G."/>
            <person name="Carder C."/>
            <person name="Lennard N."/>
            <person name="Lockey S.J."/>
            <person name="Marsh P."/>
            <person name="Skipp P."/>
            <person name="O'Connor C.D."/>
            <person name="Goodhead I."/>
            <person name="Norbertzcak H."/>
            <person name="Harris B."/>
            <person name="Ormond D."/>
            <person name="Rance R."/>
            <person name="Quail M.A."/>
            <person name="Parkhill J."/>
            <person name="Stephens R.S."/>
            <person name="Clarke I.N."/>
        </authorList>
    </citation>
    <scope>NUCLEOTIDE SEQUENCE [LARGE SCALE GENOMIC DNA]</scope>
    <source>
        <strain>ATCC VR-902B / DSM 19102 / 434/Bu</strain>
    </source>
</reference>
<organism>
    <name type="scientific">Chlamydia trachomatis serovar L2 (strain ATCC VR-902B / DSM 19102 / 434/Bu)</name>
    <dbReference type="NCBI Taxonomy" id="471472"/>
    <lineage>
        <taxon>Bacteria</taxon>
        <taxon>Pseudomonadati</taxon>
        <taxon>Chlamydiota</taxon>
        <taxon>Chlamydiia</taxon>
        <taxon>Chlamydiales</taxon>
        <taxon>Chlamydiaceae</taxon>
        <taxon>Chlamydia/Chlamydophila group</taxon>
        <taxon>Chlamydia</taxon>
    </lineage>
</organism>
<keyword id="KW-0678">Repressor</keyword>
<keyword id="KW-0687">Ribonucleoprotein</keyword>
<keyword id="KW-0689">Ribosomal protein</keyword>
<keyword id="KW-0694">RNA-binding</keyword>
<keyword id="KW-0699">rRNA-binding</keyword>
<keyword id="KW-0810">Translation regulation</keyword>
<keyword id="KW-0820">tRNA-binding</keyword>
<sequence>MTKHGKRIRGIQETYDLAKSYSLGEAIDILKQCPTVRFDQTVDVSVKLGIDPRKSDQQIRGSVSLPHGTGKVLRILVFAAGDKAAEAIEAGADFVGSDDLVEKIKGGWVDFDVAVATPDMMREVGKLGKVLGPRNLMPTPKAGTVTTDVVKTIAELRKGKIEFKADRAGVCNVGVAKLSFDSAQIKENVEALCAALVKAKPATAKGQYLVNFTISSTMGPGVTVDTRELIAL</sequence>
<protein>
    <recommendedName>
        <fullName evidence="1">Large ribosomal subunit protein uL1</fullName>
    </recommendedName>
    <alternativeName>
        <fullName evidence="2">50S ribosomal protein L1</fullName>
    </alternativeName>
</protein>
<feature type="chain" id="PRO_1000141377" description="Large ribosomal subunit protein uL1">
    <location>
        <begin position="1"/>
        <end position="232"/>
    </location>
</feature>
<proteinExistence type="inferred from homology"/>
<accession>B0B7N4</accession>